<feature type="chain" id="PRO_0000180535" description="Uncharacterized protein MG010 homolog">
    <location>
        <begin position="1"/>
        <end position="212"/>
    </location>
</feature>
<feature type="domain" description="Toprim" evidence="1">
    <location>
        <begin position="105"/>
        <end position="187"/>
    </location>
</feature>
<name>Y014_MYCPN</name>
<keyword id="KW-1185">Reference proteome</keyword>
<accession>P75099</accession>
<gene>
    <name type="ordered locus">MPN_014</name>
    <name type="ORF">D12_orf212</name>
    <name type="ORF">MP140</name>
</gene>
<sequence length="212" mass="24497">MELRNTKLEQLFYIYHRNLKYRCPMQYLTKRGFNLQDLLSVGGGLAYLGEKQWLNLSLYNFNNQLVGFLSRKVGFEKKFLYLPINKPPSKSESFLGLKHLPTETNTIYLVEGDFDWLAFRKGGILNCLPLCGLTLSDKQMKFFQQSKIEKVVLCLDNDFAGKVAAANLERILKNAGFQVKVVQLKGKVKDWNELLLLYPKNWAKALRDHLAL</sequence>
<protein>
    <recommendedName>
        <fullName>Uncharacterized protein MG010 homolog</fullName>
    </recommendedName>
</protein>
<dbReference type="EMBL" id="U00089">
    <property type="protein sequence ID" value="AAB95788.1"/>
    <property type="molecule type" value="Genomic_DNA"/>
</dbReference>
<dbReference type="PIR" id="S73466">
    <property type="entry name" value="S73466"/>
</dbReference>
<dbReference type="RefSeq" id="NP_109702.1">
    <property type="nucleotide sequence ID" value="NC_000912.1"/>
</dbReference>
<dbReference type="RefSeq" id="WP_010874371.1">
    <property type="nucleotide sequence ID" value="NZ_OU342337.1"/>
</dbReference>
<dbReference type="SMR" id="P75099"/>
<dbReference type="IntAct" id="P75099">
    <property type="interactions" value="2"/>
</dbReference>
<dbReference type="STRING" id="272634.MPN_014"/>
<dbReference type="EnsemblBacteria" id="AAB95788">
    <property type="protein sequence ID" value="AAB95788"/>
    <property type="gene ID" value="MPN_014"/>
</dbReference>
<dbReference type="KEGG" id="mpn:MPN_014"/>
<dbReference type="PATRIC" id="fig|272634.6.peg.13"/>
<dbReference type="HOGENOM" id="CLU_1265786_0_0_14"/>
<dbReference type="OrthoDB" id="9803773at2"/>
<dbReference type="BioCyc" id="MPNE272634:G1GJ3-19-MONOMER"/>
<dbReference type="Proteomes" id="UP000000808">
    <property type="component" value="Chromosome"/>
</dbReference>
<dbReference type="GO" id="GO:0005737">
    <property type="term" value="C:cytoplasm"/>
    <property type="evidence" value="ECO:0007669"/>
    <property type="project" value="TreeGrafter"/>
</dbReference>
<dbReference type="GO" id="GO:0006269">
    <property type="term" value="P:DNA replication, synthesis of primer"/>
    <property type="evidence" value="ECO:0007669"/>
    <property type="project" value="TreeGrafter"/>
</dbReference>
<dbReference type="CDD" id="cd03364">
    <property type="entry name" value="TOPRIM_DnaG_primases"/>
    <property type="match status" value="1"/>
</dbReference>
<dbReference type="Gene3D" id="3.40.1360.10">
    <property type="match status" value="1"/>
</dbReference>
<dbReference type="InterPro" id="IPR004611">
    <property type="entry name" value="DNA_primase-rel"/>
</dbReference>
<dbReference type="InterPro" id="IPR050219">
    <property type="entry name" value="DnaG_primase"/>
</dbReference>
<dbReference type="InterPro" id="IPR034151">
    <property type="entry name" value="TOPRIM_DnaG_bac"/>
</dbReference>
<dbReference type="InterPro" id="IPR006171">
    <property type="entry name" value="TOPRIM_dom"/>
</dbReference>
<dbReference type="NCBIfam" id="TIGR00646">
    <property type="entry name" value="MG010"/>
    <property type="match status" value="1"/>
</dbReference>
<dbReference type="PANTHER" id="PTHR30313">
    <property type="entry name" value="DNA PRIMASE"/>
    <property type="match status" value="1"/>
</dbReference>
<dbReference type="PANTHER" id="PTHR30313:SF2">
    <property type="entry name" value="DNA PRIMASE"/>
    <property type="match status" value="1"/>
</dbReference>
<dbReference type="Pfam" id="PF13155">
    <property type="entry name" value="Toprim_2"/>
    <property type="match status" value="1"/>
</dbReference>
<dbReference type="SMART" id="SM00493">
    <property type="entry name" value="TOPRIM"/>
    <property type="match status" value="1"/>
</dbReference>
<dbReference type="SUPFAM" id="SSF56731">
    <property type="entry name" value="DNA primase core"/>
    <property type="match status" value="1"/>
</dbReference>
<dbReference type="PROSITE" id="PS50880">
    <property type="entry name" value="TOPRIM"/>
    <property type="match status" value="1"/>
</dbReference>
<proteinExistence type="predicted"/>
<reference key="1">
    <citation type="journal article" date="1996" name="Nucleic Acids Res.">
        <title>Complete sequence analysis of the genome of the bacterium Mycoplasma pneumoniae.</title>
        <authorList>
            <person name="Himmelreich R."/>
            <person name="Hilbert H."/>
            <person name="Plagens H."/>
            <person name="Pirkl E."/>
            <person name="Li B.-C."/>
            <person name="Herrmann R."/>
        </authorList>
    </citation>
    <scope>NUCLEOTIDE SEQUENCE [LARGE SCALE GENOMIC DNA]</scope>
    <source>
        <strain>ATCC 29342 / M129 / Subtype 1</strain>
    </source>
</reference>
<evidence type="ECO:0000255" key="1">
    <source>
        <dbReference type="PROSITE-ProRule" id="PRU00995"/>
    </source>
</evidence>
<organism>
    <name type="scientific">Mycoplasma pneumoniae (strain ATCC 29342 / M129 / Subtype 1)</name>
    <name type="common">Mycoplasmoides pneumoniae</name>
    <dbReference type="NCBI Taxonomy" id="272634"/>
    <lineage>
        <taxon>Bacteria</taxon>
        <taxon>Bacillati</taxon>
        <taxon>Mycoplasmatota</taxon>
        <taxon>Mycoplasmoidales</taxon>
        <taxon>Mycoplasmoidaceae</taxon>
        <taxon>Mycoplasmoides</taxon>
    </lineage>
</organism>